<protein>
    <recommendedName>
        <fullName evidence="2">Chaperonin GroEL 2</fullName>
        <ecNumber evidence="2">5.6.1.7</ecNumber>
    </recommendedName>
    <alternativeName>
        <fullName evidence="2">60 kDa chaperonin 2</fullName>
    </alternativeName>
    <alternativeName>
        <fullName evidence="2">Chaperonin-60 2</fullName>
        <shortName evidence="2">Cpn60 2</shortName>
    </alternativeName>
</protein>
<dbReference type="EC" id="5.6.1.7" evidence="2"/>
<dbReference type="EMBL" id="CP000611">
    <property type="protein sequence ID" value="ABQ72166.1"/>
    <property type="molecule type" value="Genomic_DNA"/>
</dbReference>
<dbReference type="SMR" id="A5TZG6"/>
<dbReference type="KEGG" id="mra:MRA_0445"/>
<dbReference type="eggNOG" id="COG0459">
    <property type="taxonomic scope" value="Bacteria"/>
</dbReference>
<dbReference type="HOGENOM" id="CLU_016503_3_0_11"/>
<dbReference type="Proteomes" id="UP000001988">
    <property type="component" value="Chromosome"/>
</dbReference>
<dbReference type="GO" id="GO:0042603">
    <property type="term" value="C:capsule"/>
    <property type="evidence" value="ECO:0007669"/>
    <property type="project" value="UniProtKB-SubCell"/>
</dbReference>
<dbReference type="GO" id="GO:0009986">
    <property type="term" value="C:cell surface"/>
    <property type="evidence" value="ECO:0007669"/>
    <property type="project" value="UniProtKB-SubCell"/>
</dbReference>
<dbReference type="GO" id="GO:0005737">
    <property type="term" value="C:cytoplasm"/>
    <property type="evidence" value="ECO:0007669"/>
    <property type="project" value="UniProtKB-UniRule"/>
</dbReference>
<dbReference type="GO" id="GO:0005576">
    <property type="term" value="C:extracellular region"/>
    <property type="evidence" value="ECO:0007669"/>
    <property type="project" value="UniProtKB-KW"/>
</dbReference>
<dbReference type="GO" id="GO:0005524">
    <property type="term" value="F:ATP binding"/>
    <property type="evidence" value="ECO:0007669"/>
    <property type="project" value="UniProtKB-UniRule"/>
</dbReference>
<dbReference type="GO" id="GO:0140662">
    <property type="term" value="F:ATP-dependent protein folding chaperone"/>
    <property type="evidence" value="ECO:0007669"/>
    <property type="project" value="InterPro"/>
</dbReference>
<dbReference type="GO" id="GO:0016853">
    <property type="term" value="F:isomerase activity"/>
    <property type="evidence" value="ECO:0007669"/>
    <property type="project" value="UniProtKB-KW"/>
</dbReference>
<dbReference type="GO" id="GO:0051082">
    <property type="term" value="F:unfolded protein binding"/>
    <property type="evidence" value="ECO:0007669"/>
    <property type="project" value="UniProtKB-UniRule"/>
</dbReference>
<dbReference type="GO" id="GO:0042026">
    <property type="term" value="P:protein refolding"/>
    <property type="evidence" value="ECO:0007669"/>
    <property type="project" value="UniProtKB-UniRule"/>
</dbReference>
<dbReference type="CDD" id="cd03344">
    <property type="entry name" value="GroEL"/>
    <property type="match status" value="1"/>
</dbReference>
<dbReference type="FunFam" id="3.50.7.10:FF:000001">
    <property type="entry name" value="60 kDa chaperonin"/>
    <property type="match status" value="1"/>
</dbReference>
<dbReference type="Gene3D" id="3.50.7.10">
    <property type="entry name" value="GroEL"/>
    <property type="match status" value="1"/>
</dbReference>
<dbReference type="Gene3D" id="1.10.560.10">
    <property type="entry name" value="GroEL-like equatorial domain"/>
    <property type="match status" value="1"/>
</dbReference>
<dbReference type="Gene3D" id="3.30.260.10">
    <property type="entry name" value="TCP-1-like chaperonin intermediate domain"/>
    <property type="match status" value="1"/>
</dbReference>
<dbReference type="HAMAP" id="MF_00600">
    <property type="entry name" value="CH60"/>
    <property type="match status" value="1"/>
</dbReference>
<dbReference type="InterPro" id="IPR018370">
    <property type="entry name" value="Chaperonin_Cpn60_CS"/>
</dbReference>
<dbReference type="InterPro" id="IPR001844">
    <property type="entry name" value="Cpn60/GroEL"/>
</dbReference>
<dbReference type="InterPro" id="IPR002423">
    <property type="entry name" value="Cpn60/GroEL/TCP-1"/>
</dbReference>
<dbReference type="InterPro" id="IPR027409">
    <property type="entry name" value="GroEL-like_apical_dom_sf"/>
</dbReference>
<dbReference type="InterPro" id="IPR027413">
    <property type="entry name" value="GROEL-like_equatorial_sf"/>
</dbReference>
<dbReference type="InterPro" id="IPR027410">
    <property type="entry name" value="TCP-1-like_intermed_sf"/>
</dbReference>
<dbReference type="NCBIfam" id="TIGR02348">
    <property type="entry name" value="GroEL"/>
    <property type="match status" value="1"/>
</dbReference>
<dbReference type="NCBIfam" id="NF000592">
    <property type="entry name" value="PRK00013.1"/>
    <property type="match status" value="1"/>
</dbReference>
<dbReference type="NCBIfam" id="NF009487">
    <property type="entry name" value="PRK12849.1"/>
    <property type="match status" value="1"/>
</dbReference>
<dbReference type="NCBIfam" id="NF009488">
    <property type="entry name" value="PRK12850.1"/>
    <property type="match status" value="1"/>
</dbReference>
<dbReference type="NCBIfam" id="NF009489">
    <property type="entry name" value="PRK12851.1"/>
    <property type="match status" value="1"/>
</dbReference>
<dbReference type="PANTHER" id="PTHR45633">
    <property type="entry name" value="60 KDA HEAT SHOCK PROTEIN, MITOCHONDRIAL"/>
    <property type="match status" value="1"/>
</dbReference>
<dbReference type="Pfam" id="PF00118">
    <property type="entry name" value="Cpn60_TCP1"/>
    <property type="match status" value="1"/>
</dbReference>
<dbReference type="PRINTS" id="PR00298">
    <property type="entry name" value="CHAPERONIN60"/>
</dbReference>
<dbReference type="SUPFAM" id="SSF52029">
    <property type="entry name" value="GroEL apical domain-like"/>
    <property type="match status" value="1"/>
</dbReference>
<dbReference type="SUPFAM" id="SSF48592">
    <property type="entry name" value="GroEL equatorial domain-like"/>
    <property type="match status" value="2"/>
</dbReference>
<dbReference type="PROSITE" id="PS00296">
    <property type="entry name" value="CHAPERONINS_CPN60"/>
    <property type="match status" value="1"/>
</dbReference>
<reference key="1">
    <citation type="journal article" date="2008" name="PLoS ONE">
        <title>Genetic basis of virulence attenuation revealed by comparative genomic analysis of Mycobacterium tuberculosis strain H37Ra versus H37Rv.</title>
        <authorList>
            <person name="Zheng H."/>
            <person name="Lu L."/>
            <person name="Wang B."/>
            <person name="Pu S."/>
            <person name="Zhang X."/>
            <person name="Zhu G."/>
            <person name="Shi W."/>
            <person name="Zhang L."/>
            <person name="Wang H."/>
            <person name="Wang S."/>
            <person name="Zhao G."/>
            <person name="Zhang Y."/>
        </authorList>
    </citation>
    <scope>NUCLEOTIDE SEQUENCE [LARGE SCALE GENOMIC DNA]</scope>
    <source>
        <strain>ATCC 25177 / H37Ra</strain>
    </source>
</reference>
<gene>
    <name evidence="2" type="primary">groEL2</name>
    <name evidence="2" type="synonym">groL2</name>
    <name type="ordered locus">MRA_0445</name>
</gene>
<sequence>MAKTIAYDEEARRGLERGLNALADAVKVTLGPKGRNVVLEKKWGAPTITNDGVSIAKEIELEDPYEKIGAELVKEVAKKTDDVAGDGTTTATVLAQALVREGLRNVAAGANPLGLKRGIEKAVEKVTETLLKGAKEVETKEQIAATAAISAGDQSIGDLIAEAMDKVGNEGVITVEESNTFGLQLELTEGMRFDKGYISGYFVTDPERQEAVLEDPYILLVSSKVSTVKDLLPLLEKVIGAGKPLLIIAEDVEGEALSTLVVNKIRGTFKSVAVKAPGFGDRRKAMLQDMAILTGGQVISEEVGLTLENADLSLLGKARKVVVTKDETTIVEGAGDTDAIAGRVAQIRQEIENSDSDYDREKLQERLAKLAGGVAVIKAGAATEVELKERKHRIEDAVRNAKAAVEEGIVAGGGVTLLQAAPTLDELKLEGDEATGANIVKVALEAPLKQIAFNSGLEPGVVAEKVRNLPAGHGLNAQTGVYEDLLAAGVADPVKVTRSALQNAASIAGLFLTTEAVVADKPEKEKASVPGGGDMGGMDF</sequence>
<name>CH602_MYCTA</name>
<accession>A5TZG6</accession>
<keyword id="KW-0067">ATP-binding</keyword>
<keyword id="KW-0134">Cell wall</keyword>
<keyword id="KW-0143">Chaperone</keyword>
<keyword id="KW-0413">Isomerase</keyword>
<keyword id="KW-0547">Nucleotide-binding</keyword>
<keyword id="KW-1185">Reference proteome</keyword>
<keyword id="KW-0964">Secreted</keyword>
<comment type="function">
    <text evidence="2">Together with its co-chaperonin GroES, plays an essential role in assisting protein folding. The GroEL-GroES system forms a nano-cage that allows encapsulation of the non-native substrate proteins and provides a physical environment optimized to promote and accelerate protein folding.</text>
</comment>
<comment type="catalytic activity">
    <reaction evidence="2">
        <text>ATP + H2O + a folded polypeptide = ADP + phosphate + an unfolded polypeptide.</text>
        <dbReference type="EC" id="5.6.1.7"/>
    </reaction>
</comment>
<comment type="subunit">
    <text evidence="2">Forms a cylinder of 14 subunits composed of two heptameric rings stacked back-to-back. Interacts with the co-chaperonin GroES.</text>
</comment>
<comment type="subcellular location">
    <subcellularLocation>
        <location evidence="1">Secreted</location>
        <location evidence="1">Capsule</location>
    </subcellularLocation>
    <subcellularLocation>
        <location evidence="1">Cell surface</location>
    </subcellularLocation>
    <subcellularLocation>
        <location evidence="1">Secreted</location>
        <location evidence="1">Cell wall</location>
    </subcellularLocation>
</comment>
<comment type="similarity">
    <text evidence="2">Belongs to the chaperonin (HSP60) family.</text>
</comment>
<evidence type="ECO:0000250" key="1">
    <source>
        <dbReference type="UniProtKB" id="P9WPE7"/>
    </source>
</evidence>
<evidence type="ECO:0000255" key="2">
    <source>
        <dbReference type="HAMAP-Rule" id="MF_00600"/>
    </source>
</evidence>
<evidence type="ECO:0000256" key="3">
    <source>
        <dbReference type="SAM" id="MobiDB-lite"/>
    </source>
</evidence>
<proteinExistence type="inferred from homology"/>
<organism>
    <name type="scientific">Mycobacterium tuberculosis (strain ATCC 25177 / H37Ra)</name>
    <dbReference type="NCBI Taxonomy" id="419947"/>
    <lineage>
        <taxon>Bacteria</taxon>
        <taxon>Bacillati</taxon>
        <taxon>Actinomycetota</taxon>
        <taxon>Actinomycetes</taxon>
        <taxon>Mycobacteriales</taxon>
        <taxon>Mycobacteriaceae</taxon>
        <taxon>Mycobacterium</taxon>
        <taxon>Mycobacterium tuberculosis complex</taxon>
    </lineage>
</organism>
<feature type="chain" id="PRO_0000332026" description="Chaperonin GroEL 2">
    <location>
        <begin position="1"/>
        <end position="540"/>
    </location>
</feature>
<feature type="region of interest" description="Disordered" evidence="3">
    <location>
        <begin position="521"/>
        <end position="540"/>
    </location>
</feature>
<feature type="compositionally biased region" description="Gly residues" evidence="3">
    <location>
        <begin position="530"/>
        <end position="540"/>
    </location>
</feature>
<feature type="binding site" evidence="2">
    <location>
        <begin position="29"/>
        <end position="32"/>
    </location>
    <ligand>
        <name>ATP</name>
        <dbReference type="ChEBI" id="CHEBI:30616"/>
    </ligand>
</feature>
<feature type="binding site" evidence="2">
    <location>
        <begin position="86"/>
        <end position="90"/>
    </location>
    <ligand>
        <name>ATP</name>
        <dbReference type="ChEBI" id="CHEBI:30616"/>
    </ligand>
</feature>
<feature type="binding site" evidence="2">
    <location>
        <position position="413"/>
    </location>
    <ligand>
        <name>ATP</name>
        <dbReference type="ChEBI" id="CHEBI:30616"/>
    </ligand>
</feature>
<feature type="binding site" evidence="2">
    <location>
        <position position="492"/>
    </location>
    <ligand>
        <name>ATP</name>
        <dbReference type="ChEBI" id="CHEBI:30616"/>
    </ligand>
</feature>